<name>AROK_SALAI</name>
<sequence length="167" mass="17199">MAPVCVLVGPPGSGKTTVGQALAELLGVEFRDTDLDVEATAGKPISEIFIDEGEAHFRALEREAVAAQLASATGVLALGGGAVLAEQTRAALVGHTVVYLSVELPDAVRRVGLGAGRPLLAVNPRATLKHLLDQRRPYYAAVATATVVTDGRTPEQLAVEVAALLAA</sequence>
<dbReference type="EC" id="2.7.1.71" evidence="1"/>
<dbReference type="EMBL" id="CP000850">
    <property type="protein sequence ID" value="ABV97724.1"/>
    <property type="molecule type" value="Genomic_DNA"/>
</dbReference>
<dbReference type="SMR" id="A8LY07"/>
<dbReference type="STRING" id="391037.Sare_1839"/>
<dbReference type="KEGG" id="saq:Sare_1839"/>
<dbReference type="PATRIC" id="fig|391037.6.peg.1867"/>
<dbReference type="eggNOG" id="COG0703">
    <property type="taxonomic scope" value="Bacteria"/>
</dbReference>
<dbReference type="HOGENOM" id="CLU_057607_3_3_11"/>
<dbReference type="OrthoDB" id="9800332at2"/>
<dbReference type="UniPathway" id="UPA00053">
    <property type="reaction ID" value="UER00088"/>
</dbReference>
<dbReference type="GO" id="GO:0005829">
    <property type="term" value="C:cytosol"/>
    <property type="evidence" value="ECO:0007669"/>
    <property type="project" value="TreeGrafter"/>
</dbReference>
<dbReference type="GO" id="GO:0005524">
    <property type="term" value="F:ATP binding"/>
    <property type="evidence" value="ECO:0007669"/>
    <property type="project" value="UniProtKB-UniRule"/>
</dbReference>
<dbReference type="GO" id="GO:0000287">
    <property type="term" value="F:magnesium ion binding"/>
    <property type="evidence" value="ECO:0007669"/>
    <property type="project" value="UniProtKB-UniRule"/>
</dbReference>
<dbReference type="GO" id="GO:0004765">
    <property type="term" value="F:shikimate kinase activity"/>
    <property type="evidence" value="ECO:0007669"/>
    <property type="project" value="UniProtKB-UniRule"/>
</dbReference>
<dbReference type="GO" id="GO:0008652">
    <property type="term" value="P:amino acid biosynthetic process"/>
    <property type="evidence" value="ECO:0007669"/>
    <property type="project" value="UniProtKB-KW"/>
</dbReference>
<dbReference type="GO" id="GO:0009073">
    <property type="term" value="P:aromatic amino acid family biosynthetic process"/>
    <property type="evidence" value="ECO:0007669"/>
    <property type="project" value="UniProtKB-KW"/>
</dbReference>
<dbReference type="GO" id="GO:0009423">
    <property type="term" value="P:chorismate biosynthetic process"/>
    <property type="evidence" value="ECO:0007669"/>
    <property type="project" value="UniProtKB-UniRule"/>
</dbReference>
<dbReference type="CDD" id="cd00464">
    <property type="entry name" value="SK"/>
    <property type="match status" value="1"/>
</dbReference>
<dbReference type="Gene3D" id="3.40.50.300">
    <property type="entry name" value="P-loop containing nucleotide triphosphate hydrolases"/>
    <property type="match status" value="1"/>
</dbReference>
<dbReference type="HAMAP" id="MF_00109">
    <property type="entry name" value="Shikimate_kinase"/>
    <property type="match status" value="1"/>
</dbReference>
<dbReference type="InterPro" id="IPR027417">
    <property type="entry name" value="P-loop_NTPase"/>
</dbReference>
<dbReference type="InterPro" id="IPR031322">
    <property type="entry name" value="Shikimate/glucono_kinase"/>
</dbReference>
<dbReference type="InterPro" id="IPR000623">
    <property type="entry name" value="Shikimate_kinase/TSH1"/>
</dbReference>
<dbReference type="InterPro" id="IPR023000">
    <property type="entry name" value="Shikimate_kinase_CS"/>
</dbReference>
<dbReference type="PANTHER" id="PTHR21087">
    <property type="entry name" value="SHIKIMATE KINASE"/>
    <property type="match status" value="1"/>
</dbReference>
<dbReference type="PANTHER" id="PTHR21087:SF16">
    <property type="entry name" value="SHIKIMATE KINASE 1, CHLOROPLASTIC"/>
    <property type="match status" value="1"/>
</dbReference>
<dbReference type="Pfam" id="PF01202">
    <property type="entry name" value="SKI"/>
    <property type="match status" value="1"/>
</dbReference>
<dbReference type="PRINTS" id="PR01100">
    <property type="entry name" value="SHIKIMTKNASE"/>
</dbReference>
<dbReference type="SUPFAM" id="SSF52540">
    <property type="entry name" value="P-loop containing nucleoside triphosphate hydrolases"/>
    <property type="match status" value="1"/>
</dbReference>
<dbReference type="PROSITE" id="PS01128">
    <property type="entry name" value="SHIKIMATE_KINASE"/>
    <property type="match status" value="1"/>
</dbReference>
<accession>A8LY07</accession>
<organism>
    <name type="scientific">Salinispora arenicola (strain CNS-205)</name>
    <dbReference type="NCBI Taxonomy" id="391037"/>
    <lineage>
        <taxon>Bacteria</taxon>
        <taxon>Bacillati</taxon>
        <taxon>Actinomycetota</taxon>
        <taxon>Actinomycetes</taxon>
        <taxon>Micromonosporales</taxon>
        <taxon>Micromonosporaceae</taxon>
        <taxon>Salinispora</taxon>
    </lineage>
</organism>
<protein>
    <recommendedName>
        <fullName evidence="1">Shikimate kinase</fullName>
        <shortName evidence="1">SK</shortName>
        <ecNumber evidence="1">2.7.1.71</ecNumber>
    </recommendedName>
</protein>
<evidence type="ECO:0000255" key="1">
    <source>
        <dbReference type="HAMAP-Rule" id="MF_00109"/>
    </source>
</evidence>
<gene>
    <name evidence="1" type="primary">aroK</name>
    <name type="ordered locus">Sare_1839</name>
</gene>
<keyword id="KW-0028">Amino-acid biosynthesis</keyword>
<keyword id="KW-0057">Aromatic amino acid biosynthesis</keyword>
<keyword id="KW-0067">ATP-binding</keyword>
<keyword id="KW-0963">Cytoplasm</keyword>
<keyword id="KW-0418">Kinase</keyword>
<keyword id="KW-0460">Magnesium</keyword>
<keyword id="KW-0479">Metal-binding</keyword>
<keyword id="KW-0547">Nucleotide-binding</keyword>
<keyword id="KW-0808">Transferase</keyword>
<feature type="chain" id="PRO_1000094404" description="Shikimate kinase">
    <location>
        <begin position="1"/>
        <end position="167"/>
    </location>
</feature>
<feature type="binding site" evidence="1">
    <location>
        <begin position="12"/>
        <end position="17"/>
    </location>
    <ligand>
        <name>ATP</name>
        <dbReference type="ChEBI" id="CHEBI:30616"/>
    </ligand>
</feature>
<feature type="binding site" evidence="1">
    <location>
        <position position="16"/>
    </location>
    <ligand>
        <name>Mg(2+)</name>
        <dbReference type="ChEBI" id="CHEBI:18420"/>
    </ligand>
</feature>
<feature type="binding site" evidence="1">
    <location>
        <position position="34"/>
    </location>
    <ligand>
        <name>substrate</name>
    </ligand>
</feature>
<feature type="binding site" evidence="1">
    <location>
        <position position="58"/>
    </location>
    <ligand>
        <name>substrate</name>
    </ligand>
</feature>
<feature type="binding site" evidence="1">
    <location>
        <position position="80"/>
    </location>
    <ligand>
        <name>substrate</name>
    </ligand>
</feature>
<feature type="binding site" evidence="1">
    <location>
        <position position="117"/>
    </location>
    <ligand>
        <name>ATP</name>
        <dbReference type="ChEBI" id="CHEBI:30616"/>
    </ligand>
</feature>
<feature type="binding site" evidence="1">
    <location>
        <position position="135"/>
    </location>
    <ligand>
        <name>substrate</name>
    </ligand>
</feature>
<feature type="binding site" evidence="1">
    <location>
        <position position="152"/>
    </location>
    <ligand>
        <name>ATP</name>
        <dbReference type="ChEBI" id="CHEBI:30616"/>
    </ligand>
</feature>
<comment type="function">
    <text evidence="1">Catalyzes the specific phosphorylation of the 3-hydroxyl group of shikimic acid using ATP as a cosubstrate.</text>
</comment>
<comment type="catalytic activity">
    <reaction evidence="1">
        <text>shikimate + ATP = 3-phosphoshikimate + ADP + H(+)</text>
        <dbReference type="Rhea" id="RHEA:13121"/>
        <dbReference type="ChEBI" id="CHEBI:15378"/>
        <dbReference type="ChEBI" id="CHEBI:30616"/>
        <dbReference type="ChEBI" id="CHEBI:36208"/>
        <dbReference type="ChEBI" id="CHEBI:145989"/>
        <dbReference type="ChEBI" id="CHEBI:456216"/>
        <dbReference type="EC" id="2.7.1.71"/>
    </reaction>
</comment>
<comment type="cofactor">
    <cofactor evidence="1">
        <name>Mg(2+)</name>
        <dbReference type="ChEBI" id="CHEBI:18420"/>
    </cofactor>
    <text evidence="1">Binds 1 Mg(2+) ion per subunit.</text>
</comment>
<comment type="pathway">
    <text evidence="1">Metabolic intermediate biosynthesis; chorismate biosynthesis; chorismate from D-erythrose 4-phosphate and phosphoenolpyruvate: step 5/7.</text>
</comment>
<comment type="subunit">
    <text evidence="1">Monomer.</text>
</comment>
<comment type="subcellular location">
    <subcellularLocation>
        <location evidence="1">Cytoplasm</location>
    </subcellularLocation>
</comment>
<comment type="similarity">
    <text evidence="1">Belongs to the shikimate kinase family.</text>
</comment>
<proteinExistence type="inferred from homology"/>
<reference key="1">
    <citation type="submission" date="2007-10" db="EMBL/GenBank/DDBJ databases">
        <title>Complete sequence of Salinispora arenicola CNS-205.</title>
        <authorList>
            <consortium name="US DOE Joint Genome Institute"/>
            <person name="Copeland A."/>
            <person name="Lucas S."/>
            <person name="Lapidus A."/>
            <person name="Barry K."/>
            <person name="Glavina del Rio T."/>
            <person name="Dalin E."/>
            <person name="Tice H."/>
            <person name="Pitluck S."/>
            <person name="Foster B."/>
            <person name="Schmutz J."/>
            <person name="Larimer F."/>
            <person name="Land M."/>
            <person name="Hauser L."/>
            <person name="Kyrpides N."/>
            <person name="Ivanova N."/>
            <person name="Jensen P.R."/>
            <person name="Moore B.S."/>
            <person name="Penn K."/>
            <person name="Jenkins C."/>
            <person name="Udwary D."/>
            <person name="Xiang L."/>
            <person name="Gontang E."/>
            <person name="Richardson P."/>
        </authorList>
    </citation>
    <scope>NUCLEOTIDE SEQUENCE [LARGE SCALE GENOMIC DNA]</scope>
    <source>
        <strain>CNS-205</strain>
    </source>
</reference>